<organism>
    <name type="scientific">Streptococcus pyogenes serotype M1</name>
    <dbReference type="NCBI Taxonomy" id="301447"/>
    <lineage>
        <taxon>Bacteria</taxon>
        <taxon>Bacillati</taxon>
        <taxon>Bacillota</taxon>
        <taxon>Bacilli</taxon>
        <taxon>Lactobacillales</taxon>
        <taxon>Streptococcaceae</taxon>
        <taxon>Streptococcus</taxon>
    </lineage>
</organism>
<dbReference type="EC" id="2.7.7.6" evidence="1"/>
<dbReference type="EMBL" id="AE004092">
    <property type="protein sequence ID" value="AAK33217.1"/>
    <property type="molecule type" value="Genomic_DNA"/>
</dbReference>
<dbReference type="EMBL" id="CP000017">
    <property type="protein sequence ID" value="AAZ50703.1"/>
    <property type="molecule type" value="Genomic_DNA"/>
</dbReference>
<dbReference type="RefSeq" id="NP_268496.1">
    <property type="nucleotide sequence ID" value="NC_002737.2"/>
</dbReference>
<dbReference type="SMR" id="P0C0E0"/>
<dbReference type="PaxDb" id="1314-HKU360_00131"/>
<dbReference type="KEGG" id="spy:SPy_0099"/>
<dbReference type="KEGG" id="spz:M5005_Spy0084"/>
<dbReference type="PATRIC" id="fig|160490.10.peg.84"/>
<dbReference type="HOGENOM" id="CLU_000524_3_1_9"/>
<dbReference type="OMA" id="QDMIIGL"/>
<dbReference type="Proteomes" id="UP000000750">
    <property type="component" value="Chromosome"/>
</dbReference>
<dbReference type="GO" id="GO:0000428">
    <property type="term" value="C:DNA-directed RNA polymerase complex"/>
    <property type="evidence" value="ECO:0007669"/>
    <property type="project" value="UniProtKB-KW"/>
</dbReference>
<dbReference type="GO" id="GO:0003677">
    <property type="term" value="F:DNA binding"/>
    <property type="evidence" value="ECO:0007669"/>
    <property type="project" value="UniProtKB-UniRule"/>
</dbReference>
<dbReference type="GO" id="GO:0003899">
    <property type="term" value="F:DNA-directed RNA polymerase activity"/>
    <property type="evidence" value="ECO:0007669"/>
    <property type="project" value="UniProtKB-UniRule"/>
</dbReference>
<dbReference type="GO" id="GO:0000287">
    <property type="term" value="F:magnesium ion binding"/>
    <property type="evidence" value="ECO:0007669"/>
    <property type="project" value="UniProtKB-UniRule"/>
</dbReference>
<dbReference type="GO" id="GO:0008270">
    <property type="term" value="F:zinc ion binding"/>
    <property type="evidence" value="ECO:0007669"/>
    <property type="project" value="UniProtKB-UniRule"/>
</dbReference>
<dbReference type="GO" id="GO:0006351">
    <property type="term" value="P:DNA-templated transcription"/>
    <property type="evidence" value="ECO:0007669"/>
    <property type="project" value="UniProtKB-UniRule"/>
</dbReference>
<dbReference type="CDD" id="cd02655">
    <property type="entry name" value="RNAP_beta'_C"/>
    <property type="match status" value="1"/>
</dbReference>
<dbReference type="CDD" id="cd01609">
    <property type="entry name" value="RNAP_beta'_N"/>
    <property type="match status" value="1"/>
</dbReference>
<dbReference type="FunFam" id="1.10.150.390:FF:000002">
    <property type="entry name" value="DNA-directed RNA polymerase subunit beta"/>
    <property type="match status" value="1"/>
</dbReference>
<dbReference type="FunFam" id="4.10.860.120:FF:000001">
    <property type="entry name" value="DNA-directed RNA polymerase subunit beta"/>
    <property type="match status" value="1"/>
</dbReference>
<dbReference type="Gene3D" id="1.10.132.30">
    <property type="match status" value="1"/>
</dbReference>
<dbReference type="Gene3D" id="1.10.150.390">
    <property type="match status" value="1"/>
</dbReference>
<dbReference type="Gene3D" id="1.10.1790.20">
    <property type="match status" value="1"/>
</dbReference>
<dbReference type="Gene3D" id="1.10.40.90">
    <property type="match status" value="1"/>
</dbReference>
<dbReference type="Gene3D" id="2.40.40.20">
    <property type="match status" value="1"/>
</dbReference>
<dbReference type="Gene3D" id="2.40.50.100">
    <property type="match status" value="1"/>
</dbReference>
<dbReference type="Gene3D" id="4.10.860.120">
    <property type="entry name" value="RNA polymerase II, clamp domain"/>
    <property type="match status" value="1"/>
</dbReference>
<dbReference type="Gene3D" id="1.10.274.100">
    <property type="entry name" value="RNA polymerase Rpb1, domain 3"/>
    <property type="match status" value="1"/>
</dbReference>
<dbReference type="HAMAP" id="MF_01322">
    <property type="entry name" value="RNApol_bact_RpoC"/>
    <property type="match status" value="1"/>
</dbReference>
<dbReference type="InterPro" id="IPR045867">
    <property type="entry name" value="DNA-dir_RpoC_beta_prime"/>
</dbReference>
<dbReference type="InterPro" id="IPR012754">
    <property type="entry name" value="DNA-dir_RpoC_beta_prime_bact"/>
</dbReference>
<dbReference type="InterPro" id="IPR000722">
    <property type="entry name" value="RNA_pol_asu"/>
</dbReference>
<dbReference type="InterPro" id="IPR006592">
    <property type="entry name" value="RNA_pol_N"/>
</dbReference>
<dbReference type="InterPro" id="IPR007080">
    <property type="entry name" value="RNA_pol_Rpb1_1"/>
</dbReference>
<dbReference type="InterPro" id="IPR007066">
    <property type="entry name" value="RNA_pol_Rpb1_3"/>
</dbReference>
<dbReference type="InterPro" id="IPR042102">
    <property type="entry name" value="RNA_pol_Rpb1_3_sf"/>
</dbReference>
<dbReference type="InterPro" id="IPR007083">
    <property type="entry name" value="RNA_pol_Rpb1_4"/>
</dbReference>
<dbReference type="InterPro" id="IPR007081">
    <property type="entry name" value="RNA_pol_Rpb1_5"/>
</dbReference>
<dbReference type="InterPro" id="IPR044893">
    <property type="entry name" value="RNA_pol_Rpb1_clamp_domain"/>
</dbReference>
<dbReference type="InterPro" id="IPR038120">
    <property type="entry name" value="Rpb1_funnel_sf"/>
</dbReference>
<dbReference type="NCBIfam" id="TIGR02386">
    <property type="entry name" value="rpoC_TIGR"/>
    <property type="match status" value="1"/>
</dbReference>
<dbReference type="PANTHER" id="PTHR19376">
    <property type="entry name" value="DNA-DIRECTED RNA POLYMERASE"/>
    <property type="match status" value="1"/>
</dbReference>
<dbReference type="PANTHER" id="PTHR19376:SF54">
    <property type="entry name" value="DNA-DIRECTED RNA POLYMERASE SUBUNIT BETA"/>
    <property type="match status" value="1"/>
</dbReference>
<dbReference type="Pfam" id="PF04997">
    <property type="entry name" value="RNA_pol_Rpb1_1"/>
    <property type="match status" value="1"/>
</dbReference>
<dbReference type="Pfam" id="PF00623">
    <property type="entry name" value="RNA_pol_Rpb1_2"/>
    <property type="match status" value="2"/>
</dbReference>
<dbReference type="Pfam" id="PF04983">
    <property type="entry name" value="RNA_pol_Rpb1_3"/>
    <property type="match status" value="1"/>
</dbReference>
<dbReference type="Pfam" id="PF05000">
    <property type="entry name" value="RNA_pol_Rpb1_4"/>
    <property type="match status" value="1"/>
</dbReference>
<dbReference type="Pfam" id="PF04998">
    <property type="entry name" value="RNA_pol_Rpb1_5"/>
    <property type="match status" value="1"/>
</dbReference>
<dbReference type="SMART" id="SM00663">
    <property type="entry name" value="RPOLA_N"/>
    <property type="match status" value="1"/>
</dbReference>
<dbReference type="SUPFAM" id="SSF64484">
    <property type="entry name" value="beta and beta-prime subunits of DNA dependent RNA-polymerase"/>
    <property type="match status" value="1"/>
</dbReference>
<accession>P0C0E0</accession>
<accession>P95816</accession>
<accession>Q491L5</accession>
<evidence type="ECO:0000255" key="1">
    <source>
        <dbReference type="HAMAP-Rule" id="MF_01322"/>
    </source>
</evidence>
<proteinExistence type="inferred from homology"/>
<comment type="function">
    <text evidence="1">DNA-dependent RNA polymerase catalyzes the transcription of DNA into RNA using the four ribonucleoside triphosphates as substrates.</text>
</comment>
<comment type="catalytic activity">
    <reaction evidence="1">
        <text>RNA(n) + a ribonucleoside 5'-triphosphate = RNA(n+1) + diphosphate</text>
        <dbReference type="Rhea" id="RHEA:21248"/>
        <dbReference type="Rhea" id="RHEA-COMP:14527"/>
        <dbReference type="Rhea" id="RHEA-COMP:17342"/>
        <dbReference type="ChEBI" id="CHEBI:33019"/>
        <dbReference type="ChEBI" id="CHEBI:61557"/>
        <dbReference type="ChEBI" id="CHEBI:140395"/>
        <dbReference type="EC" id="2.7.7.6"/>
    </reaction>
</comment>
<comment type="cofactor">
    <cofactor evidence="1">
        <name>Mg(2+)</name>
        <dbReference type="ChEBI" id="CHEBI:18420"/>
    </cofactor>
    <text evidence="1">Binds 1 Mg(2+) ion per subunit.</text>
</comment>
<comment type="cofactor">
    <cofactor evidence="1">
        <name>Zn(2+)</name>
        <dbReference type="ChEBI" id="CHEBI:29105"/>
    </cofactor>
    <text evidence="1">Binds 2 Zn(2+) ions per subunit.</text>
</comment>
<comment type="subunit">
    <text evidence="1">The RNAP catalytic core consists of 2 alpha, 1 beta, 1 beta' and 1 omega subunit. When a sigma factor is associated with the core the holoenzyme is formed, which can initiate transcription.</text>
</comment>
<comment type="similarity">
    <text evidence="1">Belongs to the RNA polymerase beta' chain family.</text>
</comment>
<protein>
    <recommendedName>
        <fullName evidence="1">DNA-directed RNA polymerase subunit beta'</fullName>
        <shortName evidence="1">RNAP subunit beta'</shortName>
        <ecNumber evidence="1">2.7.7.6</ecNumber>
    </recommendedName>
    <alternativeName>
        <fullName evidence="1">RNA polymerase subunit beta'</fullName>
    </alternativeName>
    <alternativeName>
        <fullName evidence="1">Transcriptase subunit beta'</fullName>
    </alternativeName>
</protein>
<sequence>MVDVNRFKSMQITLASPSKVRSWSYGEVKKPETINYRTLKPEREGLFDEVIFGPTKDWECACGKYKRIRYKGIVCDRCGVEVTRAKVRRERMGHIELKAPVSHIWYFKGIPSRMGLTLDMSPRALEEVIYFAAYVVIDPKDTPLEPKSLLTEREYREKLQEYGHGSFVAKMGAEAIQDLLKRVDLAAEIAELKEELKSASGQKRIKAVRRLDVLDAFNKSGNKPEWMVLNILPVIPPDLRPMVQLDGGRFAASDLNDLYRRVINRNNRLARLLELNAPGIIVQNEKRMLQEAVDALIDNGRRGRPITGPGSRPLKSLSHMLKGKQGRFRQNLLGKRVDFSGRSVIAVGPTLKMYQCGVPREMAIELFKPFVMREIVAKEYAGNVKAAKRMVERGDERIWDILEEVIKEHPVLLNRAPTLHRLGIQAFEPVLIDGKALRLHPLVCEAYNADFDGDQMAIHVPLSEEAQAEARLLMLAAEHILNPKDGKPVVTPSQDMVLGNYYLTMEDAGREGEGMIFKDKDEAVMAYRNGYAHLHSRVGIAVDSMPNKPWKDNQRHKIMVTTVGKILFNDIMPEDLPYLQEPNNANLTEGTPDKYFLEPGQDIQEVIDRLDINVPFKKKNLGNIIAETFKRFRTTETSAFLDRLKDLGYYHSTLAGLTVGIADIPVIDNKAEIIDAAHHRVEEINKAFRRGLMTDDDRYVAVTTTWREAKEALEKRLIETQDPKNPIVMMMDSGARGNISNFSQLAGMRGLMAAPNGRIMELPILSNFREGLSVLEMFFSTHGARKGMTDTALKTADSGYLTRRLVDVAQDVIIREDDCGTDRGLLIRAITDGKEVTETLEERLQGRYTRKSVKHPETGEVLIGADQLITEDMARKIVDAGVEEVTIRSVFTCATRHGVCRHCYGINLATGDAVEVGEAVGTIAAQSIGEPGTQLTMRTFHTGGVASNTDITQGLPRIQEIFEARNPKGEAVITEVKGNVVEIEEDASTRTKKVYVQGKTGMGEYVIPFTARMKVEVGDEVNRGAALTEGSIQPKRLLEVRDTLSVETYLLAEVQKVYRSQGVEIGDKHVEVMVRQMLRKVRVMDPGDTDLLPGTLMDISDFTDANKDIVISGGIPATSRPVLMGITKASLETNSFLSAASFQETTRVLTDAAIRGKKDHLLGLKENVIIGKIIPAGTGMARYRNIEPQAMNEIEVIDHTEVSAEAVFTAEAE</sequence>
<name>RPOC_STRP1</name>
<gene>
    <name evidence="1" type="primary">rpoC</name>
    <name type="ordered locus">SPy_0099</name>
    <name type="ordered locus">M5005_Spy0084</name>
</gene>
<feature type="chain" id="PRO_0000067811" description="DNA-directed RNA polymerase subunit beta'">
    <location>
        <begin position="1"/>
        <end position="1213"/>
    </location>
</feature>
<feature type="binding site" evidence="1">
    <location>
        <position position="60"/>
    </location>
    <ligand>
        <name>Zn(2+)</name>
        <dbReference type="ChEBI" id="CHEBI:29105"/>
        <label>1</label>
    </ligand>
</feature>
<feature type="binding site" evidence="1">
    <location>
        <position position="62"/>
    </location>
    <ligand>
        <name>Zn(2+)</name>
        <dbReference type="ChEBI" id="CHEBI:29105"/>
        <label>1</label>
    </ligand>
</feature>
<feature type="binding site" evidence="1">
    <location>
        <position position="75"/>
    </location>
    <ligand>
        <name>Zn(2+)</name>
        <dbReference type="ChEBI" id="CHEBI:29105"/>
        <label>1</label>
    </ligand>
</feature>
<feature type="binding site" evidence="1">
    <location>
        <position position="78"/>
    </location>
    <ligand>
        <name>Zn(2+)</name>
        <dbReference type="ChEBI" id="CHEBI:29105"/>
        <label>1</label>
    </ligand>
</feature>
<feature type="binding site" evidence="1">
    <location>
        <position position="450"/>
    </location>
    <ligand>
        <name>Mg(2+)</name>
        <dbReference type="ChEBI" id="CHEBI:18420"/>
    </ligand>
</feature>
<feature type="binding site" evidence="1">
    <location>
        <position position="452"/>
    </location>
    <ligand>
        <name>Mg(2+)</name>
        <dbReference type="ChEBI" id="CHEBI:18420"/>
    </ligand>
</feature>
<feature type="binding site" evidence="1">
    <location>
        <position position="454"/>
    </location>
    <ligand>
        <name>Mg(2+)</name>
        <dbReference type="ChEBI" id="CHEBI:18420"/>
    </ligand>
</feature>
<feature type="binding site" evidence="1">
    <location>
        <position position="819"/>
    </location>
    <ligand>
        <name>Zn(2+)</name>
        <dbReference type="ChEBI" id="CHEBI:29105"/>
        <label>2</label>
    </ligand>
</feature>
<feature type="binding site" evidence="1">
    <location>
        <position position="893"/>
    </location>
    <ligand>
        <name>Zn(2+)</name>
        <dbReference type="ChEBI" id="CHEBI:29105"/>
        <label>2</label>
    </ligand>
</feature>
<feature type="binding site" evidence="1">
    <location>
        <position position="900"/>
    </location>
    <ligand>
        <name>Zn(2+)</name>
        <dbReference type="ChEBI" id="CHEBI:29105"/>
        <label>2</label>
    </ligand>
</feature>
<feature type="binding site" evidence="1">
    <location>
        <position position="903"/>
    </location>
    <ligand>
        <name>Zn(2+)</name>
        <dbReference type="ChEBI" id="CHEBI:29105"/>
        <label>2</label>
    </ligand>
</feature>
<keyword id="KW-0240">DNA-directed RNA polymerase</keyword>
<keyword id="KW-0460">Magnesium</keyword>
<keyword id="KW-0479">Metal-binding</keyword>
<keyword id="KW-0548">Nucleotidyltransferase</keyword>
<keyword id="KW-1185">Reference proteome</keyword>
<keyword id="KW-0804">Transcription</keyword>
<keyword id="KW-0808">Transferase</keyword>
<keyword id="KW-0862">Zinc</keyword>
<reference key="1">
    <citation type="journal article" date="2001" name="Proc. Natl. Acad. Sci. U.S.A.">
        <title>Complete genome sequence of an M1 strain of Streptococcus pyogenes.</title>
        <authorList>
            <person name="Ferretti J.J."/>
            <person name="McShan W.M."/>
            <person name="Ajdic D.J."/>
            <person name="Savic D.J."/>
            <person name="Savic G."/>
            <person name="Lyon K."/>
            <person name="Primeaux C."/>
            <person name="Sezate S."/>
            <person name="Suvorov A.N."/>
            <person name="Kenton S."/>
            <person name="Lai H.S."/>
            <person name="Lin S.P."/>
            <person name="Qian Y."/>
            <person name="Jia H.G."/>
            <person name="Najar F.Z."/>
            <person name="Ren Q."/>
            <person name="Zhu H."/>
            <person name="Song L."/>
            <person name="White J."/>
            <person name="Yuan X."/>
            <person name="Clifton S.W."/>
            <person name="Roe B.A."/>
            <person name="McLaughlin R.E."/>
        </authorList>
    </citation>
    <scope>NUCLEOTIDE SEQUENCE [LARGE SCALE GENOMIC DNA]</scope>
    <source>
        <strain>ATCC 700294 / SF370 / Serotype M1</strain>
    </source>
</reference>
<reference key="2">
    <citation type="journal article" date="2005" name="J. Infect. Dis.">
        <title>Evolutionary origin and emergence of a highly successful clone of serotype M1 group A Streptococcus involved multiple horizontal gene transfer events.</title>
        <authorList>
            <person name="Sumby P."/>
            <person name="Porcella S.F."/>
            <person name="Madrigal A.G."/>
            <person name="Barbian K.D."/>
            <person name="Virtaneva K."/>
            <person name="Ricklefs S.M."/>
            <person name="Sturdevant D.E."/>
            <person name="Graham M.R."/>
            <person name="Vuopio-Varkila J."/>
            <person name="Hoe N.P."/>
            <person name="Musser J.M."/>
        </authorList>
    </citation>
    <scope>NUCLEOTIDE SEQUENCE [LARGE SCALE GENOMIC DNA]</scope>
    <source>
        <strain>ATCC BAA-947 / MGAS5005 / Serotype M1</strain>
    </source>
</reference>